<protein>
    <recommendedName>
        <fullName evidence="1">Cation/acetate symporter ActP</fullName>
    </recommendedName>
    <alternativeName>
        <fullName evidence="1">Acetate permease</fullName>
    </alternativeName>
    <alternativeName>
        <fullName evidence="1">Acetate transporter ActP</fullName>
    </alternativeName>
</protein>
<sequence length="551" mass="59324">MKIRHWSALSLFVLPALAQAEALTGEVHRQPLNIQAIVMFLLFVGGTLYITYWASKRTRSRQDYYTAGGRITGFQNGLAIAGDYMSAASFLGISALVYASGYDGLIYSIGFLIGWPIILFLIAERLRNLGRYTFADVASYRLQQRPIRTLSACGSLVVVALYLIAQMVGAGKLIQLLFGLNYHVAVVLVGILMVLYVLFGGMLATTWVQIIKAVMLLSGATFMAIMVMKSVNFNFNTLFSEAVKVHPKGLSIMSPGGLVSDPISALSLGLALMFGTAGLPHILMRFFTVSDAKEARKSVFYATGFIGYFYILTFIIGFGAILLVGPNQTFKDAAGALLGGNNMAAVHLANAVGGSFFLGFISAVAFATILAVVAGLTLAGASAVSHDLYASVIKKGKANERDELRVSKITVIILGIVAIGLGILFEKQNIAFMVGLAFSIAASCNFPIIIISMYWDKLTTRGAMIGGWLGLSTAVILMILGPTIWVTILGHEKPIYPYEYPALFSMIAAFVGTWFFSITDNSETGKQERLLFKSQFVRSQTGLGASKGGAH</sequence>
<keyword id="KW-0997">Cell inner membrane</keyword>
<keyword id="KW-1003">Cell membrane</keyword>
<keyword id="KW-0406">Ion transport</keyword>
<keyword id="KW-0472">Membrane</keyword>
<keyword id="KW-0915">Sodium</keyword>
<keyword id="KW-0739">Sodium transport</keyword>
<keyword id="KW-0769">Symport</keyword>
<keyword id="KW-0812">Transmembrane</keyword>
<keyword id="KW-1133">Transmembrane helix</keyword>
<keyword id="KW-0813">Transport</keyword>
<reference key="1">
    <citation type="submission" date="2008-02" db="EMBL/GenBank/DDBJ databases">
        <title>Complete sequence of Yersinia pseudotuberculosis YPIII.</title>
        <authorList>
            <consortium name="US DOE Joint Genome Institute"/>
            <person name="Copeland A."/>
            <person name="Lucas S."/>
            <person name="Lapidus A."/>
            <person name="Glavina del Rio T."/>
            <person name="Dalin E."/>
            <person name="Tice H."/>
            <person name="Bruce D."/>
            <person name="Goodwin L."/>
            <person name="Pitluck S."/>
            <person name="Munk A.C."/>
            <person name="Brettin T."/>
            <person name="Detter J.C."/>
            <person name="Han C."/>
            <person name="Tapia R."/>
            <person name="Schmutz J."/>
            <person name="Larimer F."/>
            <person name="Land M."/>
            <person name="Hauser L."/>
            <person name="Challacombe J.F."/>
            <person name="Green L."/>
            <person name="Lindler L.E."/>
            <person name="Nikolich M.P."/>
            <person name="Richardson P."/>
        </authorList>
    </citation>
    <scope>NUCLEOTIDE SEQUENCE [LARGE SCALE GENOMIC DNA]</scope>
    <source>
        <strain>YPIII</strain>
    </source>
</reference>
<comment type="function">
    <text evidence="1">Transports acetate.</text>
</comment>
<comment type="subcellular location">
    <subcellularLocation>
        <location evidence="1">Cell inner membrane</location>
        <topology evidence="1">Multi-pass membrane protein</topology>
    </subcellularLocation>
</comment>
<comment type="similarity">
    <text evidence="1">Belongs to the sodium:solute symporter (SSF) (TC 2.A.21) family.</text>
</comment>
<dbReference type="EMBL" id="CP000950">
    <property type="protein sequence ID" value="ACA70188.1"/>
    <property type="molecule type" value="Genomic_DNA"/>
</dbReference>
<dbReference type="RefSeq" id="WP_011191562.1">
    <property type="nucleotide sequence ID" value="NZ_CP009792.1"/>
</dbReference>
<dbReference type="SMR" id="B1JNK6"/>
<dbReference type="GeneID" id="49787700"/>
<dbReference type="KEGG" id="ypy:YPK_3923"/>
<dbReference type="PATRIC" id="fig|502800.11.peg.273"/>
<dbReference type="GO" id="GO:0005886">
    <property type="term" value="C:plasma membrane"/>
    <property type="evidence" value="ECO:0007669"/>
    <property type="project" value="UniProtKB-SubCell"/>
</dbReference>
<dbReference type="GO" id="GO:0015123">
    <property type="term" value="F:acetate transmembrane transporter activity"/>
    <property type="evidence" value="ECO:0007669"/>
    <property type="project" value="UniProtKB-UniRule"/>
</dbReference>
<dbReference type="GO" id="GO:0043879">
    <property type="term" value="F:glycolate transmembrane transporter activity"/>
    <property type="evidence" value="ECO:0007669"/>
    <property type="project" value="InterPro"/>
</dbReference>
<dbReference type="GO" id="GO:0015293">
    <property type="term" value="F:symporter activity"/>
    <property type="evidence" value="ECO:0007669"/>
    <property type="project" value="UniProtKB-KW"/>
</dbReference>
<dbReference type="GO" id="GO:0006847">
    <property type="term" value="P:plasma membrane acetate transport"/>
    <property type="evidence" value="ECO:0007669"/>
    <property type="project" value="TreeGrafter"/>
</dbReference>
<dbReference type="GO" id="GO:0006814">
    <property type="term" value="P:sodium ion transport"/>
    <property type="evidence" value="ECO:0007669"/>
    <property type="project" value="UniProtKB-KW"/>
</dbReference>
<dbReference type="CDD" id="cd11480">
    <property type="entry name" value="SLC5sbd_u4"/>
    <property type="match status" value="1"/>
</dbReference>
<dbReference type="FunFam" id="1.20.1730.10:FF:000001">
    <property type="entry name" value="Cation/acetate symporter ActP"/>
    <property type="match status" value="1"/>
</dbReference>
<dbReference type="Gene3D" id="1.20.1730.10">
    <property type="entry name" value="Sodium/glucose cotransporter"/>
    <property type="match status" value="1"/>
</dbReference>
<dbReference type="HAMAP" id="MF_01426">
    <property type="entry name" value="Acet_symport_ActP"/>
    <property type="match status" value="1"/>
</dbReference>
<dbReference type="InterPro" id="IPR014083">
    <property type="entry name" value="Cation/Ac_symporter_ActP"/>
</dbReference>
<dbReference type="InterPro" id="IPR038377">
    <property type="entry name" value="Na/Glc_symporter_sf"/>
</dbReference>
<dbReference type="InterPro" id="IPR001734">
    <property type="entry name" value="Na/solute_symporter"/>
</dbReference>
<dbReference type="InterPro" id="IPR018212">
    <property type="entry name" value="Na/solute_symporter_CS"/>
</dbReference>
<dbReference type="InterPro" id="IPR050277">
    <property type="entry name" value="Sodium:Solute_Symporter"/>
</dbReference>
<dbReference type="NCBIfam" id="NF006903">
    <property type="entry name" value="PRK09395.1"/>
    <property type="match status" value="1"/>
</dbReference>
<dbReference type="NCBIfam" id="NF009135">
    <property type="entry name" value="PRK12488.1"/>
    <property type="match status" value="1"/>
</dbReference>
<dbReference type="NCBIfam" id="TIGR00813">
    <property type="entry name" value="sss"/>
    <property type="match status" value="1"/>
</dbReference>
<dbReference type="NCBIfam" id="TIGR02711">
    <property type="entry name" value="symport_actP"/>
    <property type="match status" value="1"/>
</dbReference>
<dbReference type="PANTHER" id="PTHR48086:SF6">
    <property type="entry name" value="CATION_ACETATE SYMPORTER ACTP"/>
    <property type="match status" value="1"/>
</dbReference>
<dbReference type="PANTHER" id="PTHR48086">
    <property type="entry name" value="SODIUM/PROLINE SYMPORTER-RELATED"/>
    <property type="match status" value="1"/>
</dbReference>
<dbReference type="Pfam" id="PF00474">
    <property type="entry name" value="SSF"/>
    <property type="match status" value="1"/>
</dbReference>
<dbReference type="PROSITE" id="PS00456">
    <property type="entry name" value="NA_SOLUT_SYMP_1"/>
    <property type="match status" value="1"/>
</dbReference>
<dbReference type="PROSITE" id="PS50283">
    <property type="entry name" value="NA_SOLUT_SYMP_3"/>
    <property type="match status" value="1"/>
</dbReference>
<name>ACTP_YERPY</name>
<organism>
    <name type="scientific">Yersinia pseudotuberculosis serotype O:3 (strain YPIII)</name>
    <dbReference type="NCBI Taxonomy" id="502800"/>
    <lineage>
        <taxon>Bacteria</taxon>
        <taxon>Pseudomonadati</taxon>
        <taxon>Pseudomonadota</taxon>
        <taxon>Gammaproteobacteria</taxon>
        <taxon>Enterobacterales</taxon>
        <taxon>Yersiniaceae</taxon>
        <taxon>Yersinia</taxon>
    </lineage>
</organism>
<proteinExistence type="inferred from homology"/>
<feature type="chain" id="PRO_1000145733" description="Cation/acetate symporter ActP">
    <location>
        <begin position="1"/>
        <end position="551"/>
    </location>
</feature>
<feature type="transmembrane region" description="Helical" evidence="1">
    <location>
        <begin position="5"/>
        <end position="25"/>
    </location>
</feature>
<feature type="transmembrane region" description="Helical" evidence="1">
    <location>
        <begin position="34"/>
        <end position="54"/>
    </location>
</feature>
<feature type="transmembrane region" description="Helical" evidence="1">
    <location>
        <begin position="77"/>
        <end position="97"/>
    </location>
</feature>
<feature type="transmembrane region" description="Helical" evidence="1">
    <location>
        <begin position="104"/>
        <end position="124"/>
    </location>
</feature>
<feature type="transmembrane region" description="Helical" evidence="1">
    <location>
        <begin position="150"/>
        <end position="170"/>
    </location>
</feature>
<feature type="transmembrane region" description="Helical" evidence="1">
    <location>
        <begin position="184"/>
        <end position="204"/>
    </location>
</feature>
<feature type="transmembrane region" description="Helical" evidence="1">
    <location>
        <begin position="207"/>
        <end position="227"/>
    </location>
</feature>
<feature type="transmembrane region" description="Helical" evidence="1">
    <location>
        <begin position="263"/>
        <end position="283"/>
    </location>
</feature>
<feature type="transmembrane region" description="Helical" evidence="1">
    <location>
        <begin position="304"/>
        <end position="324"/>
    </location>
</feature>
<feature type="transmembrane region" description="Helical" evidence="1">
    <location>
        <begin position="356"/>
        <end position="376"/>
    </location>
</feature>
<feature type="transmembrane region" description="Helical" evidence="1">
    <location>
        <begin position="406"/>
        <end position="426"/>
    </location>
</feature>
<feature type="transmembrane region" description="Helical" evidence="1">
    <location>
        <begin position="430"/>
        <end position="450"/>
    </location>
</feature>
<feature type="transmembrane region" description="Helical" evidence="1">
    <location>
        <begin position="469"/>
        <end position="489"/>
    </location>
</feature>
<feature type="transmembrane region" description="Helical" evidence="1">
    <location>
        <begin position="498"/>
        <end position="518"/>
    </location>
</feature>
<accession>B1JNK6</accession>
<gene>
    <name evidence="1" type="primary">actP</name>
    <name type="ordered locus">YPK_3923</name>
</gene>
<evidence type="ECO:0000255" key="1">
    <source>
        <dbReference type="HAMAP-Rule" id="MF_01426"/>
    </source>
</evidence>